<gene>
    <name type="ORF">DDB_G0285981</name>
</gene>
<protein>
    <recommendedName>
        <fullName>von Willebrand factor A domain-containing protein DDB_G0285981</fullName>
    </recommendedName>
</protein>
<keyword id="KW-1185">Reference proteome</keyword>
<accession>Q54MG1</accession>
<proteinExistence type="predicted"/>
<name>Y5981_DICDI</name>
<dbReference type="EMBL" id="AAFI02000082">
    <property type="protein sequence ID" value="EAL64449.1"/>
    <property type="molecule type" value="Genomic_DNA"/>
</dbReference>
<dbReference type="RefSeq" id="XP_637953.1">
    <property type="nucleotide sequence ID" value="XM_632861.1"/>
</dbReference>
<dbReference type="SMR" id="Q54MG1"/>
<dbReference type="FunCoup" id="Q54MG1">
    <property type="interactions" value="5"/>
</dbReference>
<dbReference type="STRING" id="44689.Q54MG1"/>
<dbReference type="GlyGen" id="Q54MG1">
    <property type="glycosylation" value="1 site"/>
</dbReference>
<dbReference type="PaxDb" id="44689-DDB0232083"/>
<dbReference type="EnsemblProtists" id="EAL64449">
    <property type="protein sequence ID" value="EAL64449"/>
    <property type="gene ID" value="DDB_G0285981"/>
</dbReference>
<dbReference type="GeneID" id="8625380"/>
<dbReference type="KEGG" id="ddi:DDB_G0285981"/>
<dbReference type="dictyBase" id="DDB_G0285981"/>
<dbReference type="VEuPathDB" id="AmoebaDB:DDB_G0285981"/>
<dbReference type="eggNOG" id="ENOG502QRPK">
    <property type="taxonomic scope" value="Eukaryota"/>
</dbReference>
<dbReference type="HOGENOM" id="CLU_327738_0_0_1"/>
<dbReference type="InParanoid" id="Q54MG1"/>
<dbReference type="OMA" id="FNVIRFD"/>
<dbReference type="PhylomeDB" id="Q54MG1"/>
<dbReference type="PRO" id="PR:Q54MG1"/>
<dbReference type="Proteomes" id="UP000002195">
    <property type="component" value="Chromosome 4"/>
</dbReference>
<dbReference type="Gene3D" id="3.40.50.410">
    <property type="entry name" value="von Willebrand factor, type A domain"/>
    <property type="match status" value="1"/>
</dbReference>
<dbReference type="InterPro" id="IPR013694">
    <property type="entry name" value="VIT"/>
</dbReference>
<dbReference type="InterPro" id="IPR002035">
    <property type="entry name" value="VWF_A"/>
</dbReference>
<dbReference type="InterPro" id="IPR036465">
    <property type="entry name" value="vWFA_dom_sf"/>
</dbReference>
<dbReference type="PANTHER" id="PTHR45737">
    <property type="entry name" value="VON WILLEBRAND FACTOR A DOMAIN-CONTAINING PROTEIN 5A"/>
    <property type="match status" value="1"/>
</dbReference>
<dbReference type="PANTHER" id="PTHR45737:SF1">
    <property type="entry name" value="VON WILLEBRAND FACTOR A DOMAIN-CONTAINING PROTEIN DDB_G0267758-RELATED"/>
    <property type="match status" value="1"/>
</dbReference>
<dbReference type="Pfam" id="PF08487">
    <property type="entry name" value="VIT"/>
    <property type="match status" value="1"/>
</dbReference>
<dbReference type="Pfam" id="PF13768">
    <property type="entry name" value="VWA_3"/>
    <property type="match status" value="1"/>
</dbReference>
<dbReference type="SMART" id="SM00609">
    <property type="entry name" value="VIT"/>
    <property type="match status" value="1"/>
</dbReference>
<dbReference type="SMART" id="SM00327">
    <property type="entry name" value="VWA"/>
    <property type="match status" value="1"/>
</dbReference>
<dbReference type="SUPFAM" id="SSF53300">
    <property type="entry name" value="vWA-like"/>
    <property type="match status" value="1"/>
</dbReference>
<dbReference type="PROSITE" id="PS51468">
    <property type="entry name" value="VIT"/>
    <property type="match status" value="1"/>
</dbReference>
<dbReference type="PROSITE" id="PS50234">
    <property type="entry name" value="VWFA"/>
    <property type="match status" value="1"/>
</dbReference>
<reference key="1">
    <citation type="journal article" date="2005" name="Nature">
        <title>The genome of the social amoeba Dictyostelium discoideum.</title>
        <authorList>
            <person name="Eichinger L."/>
            <person name="Pachebat J.A."/>
            <person name="Gloeckner G."/>
            <person name="Rajandream M.A."/>
            <person name="Sucgang R."/>
            <person name="Berriman M."/>
            <person name="Song J."/>
            <person name="Olsen R."/>
            <person name="Szafranski K."/>
            <person name="Xu Q."/>
            <person name="Tunggal B."/>
            <person name="Kummerfeld S."/>
            <person name="Madera M."/>
            <person name="Konfortov B.A."/>
            <person name="Rivero F."/>
            <person name="Bankier A.T."/>
            <person name="Lehmann R."/>
            <person name="Hamlin N."/>
            <person name="Davies R."/>
            <person name="Gaudet P."/>
            <person name="Fey P."/>
            <person name="Pilcher K."/>
            <person name="Chen G."/>
            <person name="Saunders D."/>
            <person name="Sodergren E.J."/>
            <person name="Davis P."/>
            <person name="Kerhornou A."/>
            <person name="Nie X."/>
            <person name="Hall N."/>
            <person name="Anjard C."/>
            <person name="Hemphill L."/>
            <person name="Bason N."/>
            <person name="Farbrother P."/>
            <person name="Desany B."/>
            <person name="Just E."/>
            <person name="Morio T."/>
            <person name="Rost R."/>
            <person name="Churcher C.M."/>
            <person name="Cooper J."/>
            <person name="Haydock S."/>
            <person name="van Driessche N."/>
            <person name="Cronin A."/>
            <person name="Goodhead I."/>
            <person name="Muzny D.M."/>
            <person name="Mourier T."/>
            <person name="Pain A."/>
            <person name="Lu M."/>
            <person name="Harper D."/>
            <person name="Lindsay R."/>
            <person name="Hauser H."/>
            <person name="James K.D."/>
            <person name="Quiles M."/>
            <person name="Madan Babu M."/>
            <person name="Saito T."/>
            <person name="Buchrieser C."/>
            <person name="Wardroper A."/>
            <person name="Felder M."/>
            <person name="Thangavelu M."/>
            <person name="Johnson D."/>
            <person name="Knights A."/>
            <person name="Loulseged H."/>
            <person name="Mungall K.L."/>
            <person name="Oliver K."/>
            <person name="Price C."/>
            <person name="Quail M.A."/>
            <person name="Urushihara H."/>
            <person name="Hernandez J."/>
            <person name="Rabbinowitsch E."/>
            <person name="Steffen D."/>
            <person name="Sanders M."/>
            <person name="Ma J."/>
            <person name="Kohara Y."/>
            <person name="Sharp S."/>
            <person name="Simmonds M.N."/>
            <person name="Spiegler S."/>
            <person name="Tivey A."/>
            <person name="Sugano S."/>
            <person name="White B."/>
            <person name="Walker D."/>
            <person name="Woodward J.R."/>
            <person name="Winckler T."/>
            <person name="Tanaka Y."/>
            <person name="Shaulsky G."/>
            <person name="Schleicher M."/>
            <person name="Weinstock G.M."/>
            <person name="Rosenthal A."/>
            <person name="Cox E.C."/>
            <person name="Chisholm R.L."/>
            <person name="Gibbs R.A."/>
            <person name="Loomis W.F."/>
            <person name="Platzer M."/>
            <person name="Kay R.R."/>
            <person name="Williams J.G."/>
            <person name="Dear P.H."/>
            <person name="Noegel A.A."/>
            <person name="Barrell B.G."/>
            <person name="Kuspa A."/>
        </authorList>
    </citation>
    <scope>NUCLEOTIDE SEQUENCE [LARGE SCALE GENOMIC DNA]</scope>
    <source>
        <strain>AX4</strain>
    </source>
</reference>
<organism>
    <name type="scientific">Dictyostelium discoideum</name>
    <name type="common">Social amoeba</name>
    <dbReference type="NCBI Taxonomy" id="44689"/>
    <lineage>
        <taxon>Eukaryota</taxon>
        <taxon>Amoebozoa</taxon>
        <taxon>Evosea</taxon>
        <taxon>Eumycetozoa</taxon>
        <taxon>Dictyostelia</taxon>
        <taxon>Dictyosteliales</taxon>
        <taxon>Dictyosteliaceae</taxon>
        <taxon>Dictyostelium</taxon>
    </lineage>
</organism>
<sequence>MLQSLKNVFFSETTTTTTTSTTTPVSNSAIKRYIGNINDYKNANYFNYYRILENKYDYLRDTFGLKTFSNNETFKLIDFTIDSEMNNTCITSIWNQKYSNNSSIPVEGIYKIPLAPYSVISGFTVEYQDKVFIGKIKSKEKAQNQYSDSIASGGQAFLAEKTQDGQFSFRIGNLPPNENVTIHLTIISGVCPHLSSLQNCFHRFLFPNYSFNFQFNLNIKLTLPIKTIELLYYPNREIKFKENSNNKEATLTFSSKNGIDSDIVCIVEPENDIERPQSIIEHSKLNNTYAVSVNFTPSFSHLTSDDVNQKSEFIFLIDCSGSMSGEPIKKAKRALEIIIRSLNENCKFNIYCFGSRFTKAFDNSKMYNDETLAQISGYVEKIDADLGGTELLPPIRDILSTESDFEYPRQLFILTDGEVSERDSLINYVATESNNTRIFTYGIGNSVDTELVIGLSKACKGYYEMIKDNSNFEEQVMKLVSIAFEPTLSNIKVDWGTELQIEQGPTKIRPLYSGETLIVYALLKDNKIPQSTVQVSLIGDGPTGSKLEFPITLDFSKTIDYENNSVHTLAAFNIIKDLEEVERKGNHSNNRDRIEELGKSYGLISKYTSYIVTAASEQVTEETMKTLNIIQTPTTTTTTSHSNRRREEADHTMNQTLLKNCAVVDDLFESCEMLSETSIKFECNRVYKKIPSSLSKIFSFFSSLSTSSSVRSEVVSNFDNDIESEEKKNNSINNNSDSLLKLIKLQKANGSWSSPFSEFKIDLSKKPSNIDSDDIWITLIVINKILNDYPTQQSQYDLVIQKASKWVKQQLTRLNIPNQYGSLLATSKLHI</sequence>
<evidence type="ECO:0000255" key="1">
    <source>
        <dbReference type="PROSITE-ProRule" id="PRU00219"/>
    </source>
</evidence>
<evidence type="ECO:0000255" key="2">
    <source>
        <dbReference type="PROSITE-ProRule" id="PRU00801"/>
    </source>
</evidence>
<feature type="chain" id="PRO_0000389213" description="von Willebrand factor A domain-containing protein DDB_G0285981">
    <location>
        <begin position="1"/>
        <end position="831"/>
    </location>
</feature>
<feature type="domain" description="VIT" evidence="2">
    <location>
        <begin position="60"/>
        <end position="188"/>
    </location>
</feature>
<feature type="domain" description="VWFA" evidence="1">
    <location>
        <begin position="312"/>
        <end position="480"/>
    </location>
</feature>